<organism>
    <name type="scientific">Neurospora crassa (strain ATCC 24698 / 74-OR23-1A / CBS 708.71 / DSM 1257 / FGSC 987)</name>
    <dbReference type="NCBI Taxonomy" id="367110"/>
    <lineage>
        <taxon>Eukaryota</taxon>
        <taxon>Fungi</taxon>
        <taxon>Dikarya</taxon>
        <taxon>Ascomycota</taxon>
        <taxon>Pezizomycotina</taxon>
        <taxon>Sordariomycetes</taxon>
        <taxon>Sordariomycetidae</taxon>
        <taxon>Sordariales</taxon>
        <taxon>Sordariaceae</taxon>
        <taxon>Neurospora</taxon>
    </lineage>
</organism>
<dbReference type="EC" id="2.7.7.79" evidence="2"/>
<dbReference type="EMBL" id="CM002236">
    <property type="protein sequence ID" value="ESA43814.1"/>
    <property type="molecule type" value="Genomic_DNA"/>
</dbReference>
<dbReference type="EMBL" id="CM002236">
    <property type="protein sequence ID" value="ESA43815.1"/>
    <property type="molecule type" value="Genomic_DNA"/>
</dbReference>
<dbReference type="RefSeq" id="XP_011392934.1">
    <property type="nucleotide sequence ID" value="XM_011394632.1"/>
</dbReference>
<dbReference type="RefSeq" id="XP_011392935.1">
    <property type="nucleotide sequence ID" value="XM_011394633.1"/>
</dbReference>
<dbReference type="SMR" id="Q7SDM8"/>
<dbReference type="FunCoup" id="Q7SDM8">
    <property type="interactions" value="732"/>
</dbReference>
<dbReference type="STRING" id="367110.Q7SDM8"/>
<dbReference type="PaxDb" id="5141-EFNCRP00000001295"/>
<dbReference type="EnsemblFungi" id="ESA43814">
    <property type="protein sequence ID" value="ESA43814"/>
    <property type="gene ID" value="NCU02105"/>
</dbReference>
<dbReference type="EnsemblFungi" id="ESA43815">
    <property type="protein sequence ID" value="ESA43815"/>
    <property type="gene ID" value="NCU02105"/>
</dbReference>
<dbReference type="GeneID" id="3880248"/>
<dbReference type="KEGG" id="ncr:NCU02105"/>
<dbReference type="VEuPathDB" id="FungiDB:NCU02105"/>
<dbReference type="HOGENOM" id="CLU_044271_1_1_1"/>
<dbReference type="InParanoid" id="Q7SDM8"/>
<dbReference type="OrthoDB" id="62560at2759"/>
<dbReference type="Proteomes" id="UP000001805">
    <property type="component" value="Chromosome 1, Linkage Group I"/>
</dbReference>
<dbReference type="GO" id="GO:0005525">
    <property type="term" value="F:GTP binding"/>
    <property type="evidence" value="ECO:0007669"/>
    <property type="project" value="UniProtKB-KW"/>
</dbReference>
<dbReference type="GO" id="GO:0042802">
    <property type="term" value="F:identical protein binding"/>
    <property type="evidence" value="ECO:0007669"/>
    <property type="project" value="EnsemblFungi"/>
</dbReference>
<dbReference type="GO" id="GO:0000287">
    <property type="term" value="F:magnesium ion binding"/>
    <property type="evidence" value="ECO:0007669"/>
    <property type="project" value="InterPro"/>
</dbReference>
<dbReference type="GO" id="GO:0008193">
    <property type="term" value="F:tRNA guanylyltransferase activity"/>
    <property type="evidence" value="ECO:0000250"/>
    <property type="project" value="UniProtKB"/>
</dbReference>
<dbReference type="GO" id="GO:0006400">
    <property type="term" value="P:tRNA modification"/>
    <property type="evidence" value="ECO:0000250"/>
    <property type="project" value="UniProtKB"/>
</dbReference>
<dbReference type="GO" id="GO:0008033">
    <property type="term" value="P:tRNA processing"/>
    <property type="evidence" value="ECO:0000250"/>
    <property type="project" value="UniProtKB"/>
</dbReference>
<dbReference type="FunFam" id="3.30.70.3000:FF:000001">
    <property type="entry name" value="tRNA(His) guanylyltransferase"/>
    <property type="match status" value="1"/>
</dbReference>
<dbReference type="Gene3D" id="3.30.70.3000">
    <property type="match status" value="1"/>
</dbReference>
<dbReference type="InterPro" id="IPR025845">
    <property type="entry name" value="Thg1_C_dom"/>
</dbReference>
<dbReference type="InterPro" id="IPR024956">
    <property type="entry name" value="tRNAHis_GuaTrfase_cat"/>
</dbReference>
<dbReference type="InterPro" id="IPR007537">
    <property type="entry name" value="tRNAHis_GuaTrfase_Thg1"/>
</dbReference>
<dbReference type="InterPro" id="IPR038469">
    <property type="entry name" value="tRNAHis_GuaTrfase_Thg1_sf"/>
</dbReference>
<dbReference type="PANTHER" id="PTHR12729">
    <property type="entry name" value="TRNA(HIS) GUANYLYLTRANSFERASE-RELATED"/>
    <property type="match status" value="1"/>
</dbReference>
<dbReference type="PANTHER" id="PTHR12729:SF6">
    <property type="entry name" value="TRNA(HIS) GUANYLYLTRANSFERASE-RELATED"/>
    <property type="match status" value="1"/>
</dbReference>
<dbReference type="Pfam" id="PF04446">
    <property type="entry name" value="Thg1"/>
    <property type="match status" value="1"/>
</dbReference>
<dbReference type="Pfam" id="PF14413">
    <property type="entry name" value="Thg1C"/>
    <property type="match status" value="1"/>
</dbReference>
<dbReference type="PIRSF" id="PIRSF028980">
    <property type="entry name" value="tRNAHis_guanylyltransferase"/>
    <property type="match status" value="1"/>
</dbReference>
<accession>Q7SDM8</accession>
<accession>V5IQ20</accession>
<name>THG1_NEUCR</name>
<keyword id="KW-0342">GTP-binding</keyword>
<keyword id="KW-0460">Magnesium</keyword>
<keyword id="KW-0479">Metal-binding</keyword>
<keyword id="KW-0547">Nucleotide-binding</keyword>
<keyword id="KW-0548">Nucleotidyltransferase</keyword>
<keyword id="KW-1185">Reference proteome</keyword>
<keyword id="KW-0808">Transferase</keyword>
<keyword id="KW-0819">tRNA processing</keyword>
<proteinExistence type="inferred from homology"/>
<gene>
    <name type="primary">rgt-1</name>
    <name type="synonym">thg1</name>
    <name type="ORF">NCU02105</name>
</gene>
<feature type="chain" id="PRO_0000284992" description="tRNA(His) guanylyltransferase">
    <location>
        <begin position="1"/>
        <end position="293"/>
    </location>
</feature>
<feature type="region of interest" description="Disordered" evidence="3">
    <location>
        <begin position="226"/>
        <end position="252"/>
    </location>
</feature>
<feature type="binding site" evidence="1">
    <location>
        <begin position="29"/>
        <end position="34"/>
    </location>
    <ligand>
        <name>GTP</name>
        <dbReference type="ChEBI" id="CHEBI:37565"/>
    </ligand>
</feature>
<feature type="binding site" evidence="1">
    <location>
        <position position="29"/>
    </location>
    <ligand>
        <name>Mg(2+)</name>
        <dbReference type="ChEBI" id="CHEBI:18420"/>
        <label>1</label>
        <note>catalytic</note>
    </ligand>
</feature>
<feature type="binding site" evidence="1">
    <location>
        <position position="29"/>
    </location>
    <ligand>
        <name>Mg(2+)</name>
        <dbReference type="ChEBI" id="CHEBI:18420"/>
        <label>2</label>
        <note>catalytic</note>
    </ligand>
</feature>
<feature type="binding site" evidence="1">
    <location>
        <position position="30"/>
    </location>
    <ligand>
        <name>Mg(2+)</name>
        <dbReference type="ChEBI" id="CHEBI:18420"/>
        <label>1</label>
        <note>catalytic</note>
    </ligand>
</feature>
<feature type="binding site" evidence="1">
    <location>
        <begin position="75"/>
        <end position="76"/>
    </location>
    <ligand>
        <name>GTP</name>
        <dbReference type="ChEBI" id="CHEBI:37565"/>
    </ligand>
</feature>
<feature type="binding site" evidence="1">
    <location>
        <position position="76"/>
    </location>
    <ligand>
        <name>Mg(2+)</name>
        <dbReference type="ChEBI" id="CHEBI:18420"/>
        <label>1</label>
        <note>catalytic</note>
    </ligand>
</feature>
<feature type="binding site" evidence="1">
    <location>
        <position position="76"/>
    </location>
    <ligand>
        <name>Mg(2+)</name>
        <dbReference type="ChEBI" id="CHEBI:18420"/>
        <label>2</label>
        <note>catalytic</note>
    </ligand>
</feature>
<evidence type="ECO:0000250" key="1"/>
<evidence type="ECO:0000250" key="2">
    <source>
        <dbReference type="UniProtKB" id="P53215"/>
    </source>
</evidence>
<evidence type="ECO:0000256" key="3">
    <source>
        <dbReference type="SAM" id="MobiDB-lite"/>
    </source>
</evidence>
<evidence type="ECO:0000305" key="4"/>
<reference key="1">
    <citation type="journal article" date="2003" name="Nature">
        <title>The genome sequence of the filamentous fungus Neurospora crassa.</title>
        <authorList>
            <person name="Galagan J.E."/>
            <person name="Calvo S.E."/>
            <person name="Borkovich K.A."/>
            <person name="Selker E.U."/>
            <person name="Read N.D."/>
            <person name="Jaffe D.B."/>
            <person name="FitzHugh W."/>
            <person name="Ma L.-J."/>
            <person name="Smirnov S."/>
            <person name="Purcell S."/>
            <person name="Rehman B."/>
            <person name="Elkins T."/>
            <person name="Engels R."/>
            <person name="Wang S."/>
            <person name="Nielsen C.B."/>
            <person name="Butler J."/>
            <person name="Endrizzi M."/>
            <person name="Qui D."/>
            <person name="Ianakiev P."/>
            <person name="Bell-Pedersen D."/>
            <person name="Nelson M.A."/>
            <person name="Werner-Washburne M."/>
            <person name="Selitrennikoff C.P."/>
            <person name="Kinsey J.A."/>
            <person name="Braun E.L."/>
            <person name="Zelter A."/>
            <person name="Schulte U."/>
            <person name="Kothe G.O."/>
            <person name="Jedd G."/>
            <person name="Mewes H.-W."/>
            <person name="Staben C."/>
            <person name="Marcotte E."/>
            <person name="Greenberg D."/>
            <person name="Roy A."/>
            <person name="Foley K."/>
            <person name="Naylor J."/>
            <person name="Stange-Thomann N."/>
            <person name="Barrett R."/>
            <person name="Gnerre S."/>
            <person name="Kamal M."/>
            <person name="Kamvysselis M."/>
            <person name="Mauceli E.W."/>
            <person name="Bielke C."/>
            <person name="Rudd S."/>
            <person name="Frishman D."/>
            <person name="Krystofova S."/>
            <person name="Rasmussen C."/>
            <person name="Metzenberg R.L."/>
            <person name="Perkins D.D."/>
            <person name="Kroken S."/>
            <person name="Cogoni C."/>
            <person name="Macino G."/>
            <person name="Catcheside D.E.A."/>
            <person name="Li W."/>
            <person name="Pratt R.J."/>
            <person name="Osmani S.A."/>
            <person name="DeSouza C.P.C."/>
            <person name="Glass N.L."/>
            <person name="Orbach M.J."/>
            <person name="Berglund J.A."/>
            <person name="Voelker R."/>
            <person name="Yarden O."/>
            <person name="Plamann M."/>
            <person name="Seiler S."/>
            <person name="Dunlap J.C."/>
            <person name="Radford A."/>
            <person name="Aramayo R."/>
            <person name="Natvig D.O."/>
            <person name="Alex L.A."/>
            <person name="Mannhaupt G."/>
            <person name="Ebbole D.J."/>
            <person name="Freitag M."/>
            <person name="Paulsen I."/>
            <person name="Sachs M.S."/>
            <person name="Lander E.S."/>
            <person name="Nusbaum C."/>
            <person name="Birren B.W."/>
        </authorList>
    </citation>
    <scope>NUCLEOTIDE SEQUENCE [LARGE SCALE GENOMIC DNA]</scope>
    <source>
        <strain>ATCC 24698 / 74-OR23-1A / CBS 708.71 / DSM 1257 / FGSC 987</strain>
    </source>
</reference>
<comment type="function">
    <text evidence="2">Adds a GMP to the 5'-end of tRNA(His) after transcription and RNase P cleavage.</text>
</comment>
<comment type="catalytic activity">
    <reaction evidence="2">
        <text>a 5'-end ribonucleotide-tRNA(His) + GTP + ATP + H2O = a 5'-end phospho-guanosine-ribonucleotide-tRNA(His) + AMP + 2 diphosphate + H(+)</text>
        <dbReference type="Rhea" id="RHEA:54564"/>
        <dbReference type="Rhea" id="RHEA-COMP:14193"/>
        <dbReference type="Rhea" id="RHEA-COMP:14917"/>
        <dbReference type="ChEBI" id="CHEBI:15377"/>
        <dbReference type="ChEBI" id="CHEBI:15378"/>
        <dbReference type="ChEBI" id="CHEBI:30616"/>
        <dbReference type="ChEBI" id="CHEBI:33019"/>
        <dbReference type="ChEBI" id="CHEBI:37565"/>
        <dbReference type="ChEBI" id="CHEBI:138282"/>
        <dbReference type="ChEBI" id="CHEBI:141847"/>
        <dbReference type="ChEBI" id="CHEBI:456215"/>
        <dbReference type="EC" id="2.7.7.79"/>
    </reaction>
</comment>
<comment type="cofactor">
    <cofactor evidence="1">
        <name>Mg(2+)</name>
        <dbReference type="ChEBI" id="CHEBI:18420"/>
    </cofactor>
    <text evidence="1">Binds 2 magnesium ions per subunit.</text>
</comment>
<comment type="similarity">
    <text evidence="4">Belongs to the tRNA(His) guanylyltransferase family.</text>
</comment>
<sequence length="293" mass="33604">MANSKFEYVKQFEQPDSLLPNTWIVVRLDGRGFTKFSTKYAFEKPNDKRALDLMNAAARSVMSELPDITIAYGVSDEYSFVFHKSCTLFERRASKLVSTIVSTFTAYYIHHWPTYFVDGPPLSPPLPSFDGRAVCYPSVQNLRDYMSWRQVDCHINNLYNTTFWALINQGGMDGTAAELMLKGTFSADKNEILFKKFGINYNNEPEMFKKGSVVFRNYELVEPGTKKVSEEEAEEMSSSAVPEVKSKSQVEKDKKVRTKAKIVVEHLDIIRDEFWERRPWLLSGTPGKVPKEP</sequence>
<protein>
    <recommendedName>
        <fullName>tRNA(His) guanylyltransferase</fullName>
        <ecNumber evidence="2">2.7.7.79</ecNumber>
    </recommendedName>
    <alternativeName>
        <fullName>tRNA-histidine guanylyltransferase</fullName>
    </alternativeName>
</protein>